<name>APOA1_CAVAP</name>
<dbReference type="EMBL" id="AVPZ01000111">
    <property type="status" value="NOT_ANNOTATED_CDS"/>
    <property type="molecule type" value="Genomic_DNA"/>
</dbReference>
<dbReference type="SMR" id="P0DTU6"/>
<dbReference type="Ensembl" id="ENSCAPT00000012521">
    <property type="protein sequence ID" value="ENSCAPP00000008812"/>
    <property type="gene ID" value="ENSCAPG00000010428"/>
</dbReference>
<dbReference type="OMA" id="EYVAQFE"/>
<dbReference type="GO" id="GO:0042627">
    <property type="term" value="C:chylomicron"/>
    <property type="evidence" value="ECO:0007669"/>
    <property type="project" value="TreeGrafter"/>
</dbReference>
<dbReference type="GO" id="GO:1903561">
    <property type="term" value="C:extracellular vesicle"/>
    <property type="evidence" value="ECO:0007669"/>
    <property type="project" value="TreeGrafter"/>
</dbReference>
<dbReference type="GO" id="GO:0034364">
    <property type="term" value="C:high-density lipoprotein particle"/>
    <property type="evidence" value="ECO:0007669"/>
    <property type="project" value="UniProtKB-KW"/>
</dbReference>
<dbReference type="GO" id="GO:0034362">
    <property type="term" value="C:low-density lipoprotein particle"/>
    <property type="evidence" value="ECO:0007669"/>
    <property type="project" value="TreeGrafter"/>
</dbReference>
<dbReference type="GO" id="GO:0034361">
    <property type="term" value="C:very-low-density lipoprotein particle"/>
    <property type="evidence" value="ECO:0007669"/>
    <property type="project" value="TreeGrafter"/>
</dbReference>
<dbReference type="GO" id="GO:0120020">
    <property type="term" value="F:cholesterol transfer activity"/>
    <property type="evidence" value="ECO:0007669"/>
    <property type="project" value="TreeGrafter"/>
</dbReference>
<dbReference type="GO" id="GO:0060228">
    <property type="term" value="F:phosphatidylcholine-sterol O-acyltransferase activator activity"/>
    <property type="evidence" value="ECO:0007669"/>
    <property type="project" value="TreeGrafter"/>
</dbReference>
<dbReference type="GO" id="GO:0005543">
    <property type="term" value="F:phospholipid binding"/>
    <property type="evidence" value="ECO:0007669"/>
    <property type="project" value="TreeGrafter"/>
</dbReference>
<dbReference type="GO" id="GO:0042803">
    <property type="term" value="F:protein homodimerization activity"/>
    <property type="evidence" value="ECO:0000250"/>
    <property type="project" value="UniProtKB"/>
</dbReference>
<dbReference type="GO" id="GO:0055090">
    <property type="term" value="P:acylglycerol homeostasis"/>
    <property type="evidence" value="ECO:0007669"/>
    <property type="project" value="TreeGrafter"/>
</dbReference>
<dbReference type="GO" id="GO:0033344">
    <property type="term" value="P:cholesterol efflux"/>
    <property type="evidence" value="ECO:0007669"/>
    <property type="project" value="TreeGrafter"/>
</dbReference>
<dbReference type="GO" id="GO:0008203">
    <property type="term" value="P:cholesterol metabolic process"/>
    <property type="evidence" value="ECO:0007669"/>
    <property type="project" value="UniProtKB-KW"/>
</dbReference>
<dbReference type="GO" id="GO:0042157">
    <property type="term" value="P:lipoprotein metabolic process"/>
    <property type="evidence" value="ECO:0007669"/>
    <property type="project" value="InterPro"/>
</dbReference>
<dbReference type="GO" id="GO:0033700">
    <property type="term" value="P:phospholipid efflux"/>
    <property type="evidence" value="ECO:0007669"/>
    <property type="project" value="TreeGrafter"/>
</dbReference>
<dbReference type="FunFam" id="1.20.120.20:FF:000001">
    <property type="entry name" value="Apolipoprotein A-I"/>
    <property type="match status" value="1"/>
</dbReference>
<dbReference type="FunFam" id="1.20.5.20:FF:000001">
    <property type="entry name" value="apolipoprotein A-I"/>
    <property type="match status" value="1"/>
</dbReference>
<dbReference type="Gene3D" id="1.20.5.20">
    <property type="match status" value="1"/>
</dbReference>
<dbReference type="Gene3D" id="6.10.140.380">
    <property type="match status" value="1"/>
</dbReference>
<dbReference type="Gene3D" id="1.20.120.20">
    <property type="entry name" value="Apolipoprotein"/>
    <property type="match status" value="1"/>
</dbReference>
<dbReference type="InterPro" id="IPR000074">
    <property type="entry name" value="ApoA_E"/>
</dbReference>
<dbReference type="InterPro" id="IPR050163">
    <property type="entry name" value="Apolipoprotein_A1/A4/E"/>
</dbReference>
<dbReference type="PANTHER" id="PTHR18976">
    <property type="entry name" value="APOLIPOPROTEIN"/>
    <property type="match status" value="1"/>
</dbReference>
<dbReference type="PANTHER" id="PTHR18976:SF11">
    <property type="entry name" value="APOLIPOPROTEIN A-I"/>
    <property type="match status" value="1"/>
</dbReference>
<dbReference type="Pfam" id="PF01442">
    <property type="entry name" value="Apolipoprotein"/>
    <property type="match status" value="1"/>
</dbReference>
<dbReference type="SUPFAM" id="SSF58113">
    <property type="entry name" value="Apolipoprotein A-I"/>
    <property type="match status" value="1"/>
</dbReference>
<sequence>MKAVLLVVAALFLAGSQARHFWQQDDPKTSWDVVKEFANKYVDAVKESGKGYVEQLDASSLGQQLNLRLSDNWDTLSTILTKLQADFGLATQEFWDTLEKETEWLKQIVSEDLQDVKHKVQPYLENFQKKVQEEVERYREKVRPLGIELRDGARQKLQELQEKLTPLGEDLRDRTREHVDVLRTQLAPFSEEMRQRLAKRLEELKDSATLADYHAKASEHLKMLGEKAKPALEDLRQGLLPVLENLKASILSSIDQASKQLAAQ</sequence>
<evidence type="ECO:0000250" key="1"/>
<evidence type="ECO:0000250" key="2">
    <source>
        <dbReference type="UniProtKB" id="G5BQH5"/>
    </source>
</evidence>
<evidence type="ECO:0000250" key="3">
    <source>
        <dbReference type="UniProtKB" id="P02647"/>
    </source>
</evidence>
<evidence type="ECO:0000250" key="4">
    <source>
        <dbReference type="UniProtKB" id="P02648"/>
    </source>
</evidence>
<evidence type="ECO:0000250" key="5">
    <source>
        <dbReference type="UniProtKB" id="P04639"/>
    </source>
</evidence>
<evidence type="ECO:0000255" key="6"/>
<evidence type="ECO:0000305" key="7"/>
<reference key="1">
    <citation type="submission" date="2013-07" db="EMBL/GenBank/DDBJ databases">
        <title>Exploring the methylome of a non-model mammal: A methylome-specific reference genome and a DNA methylation-enrichment-bisulfite-sequencing method (MEBS).</title>
        <authorList>
            <person name="Weyrich A."/>
            <person name="Schuellermann T."/>
            <person name="Heeger F."/>
            <person name="Mazzoni C."/>
            <person name="Jeschek M."/>
            <person name="Chen W."/>
            <person name="Schumann K."/>
            <person name="Fickel J."/>
        </authorList>
    </citation>
    <scope>NUCLEOTIDE SEQUENCE [LARGE SCALE GENOMIC DNA]</scope>
    <source>
        <tissue>Liver</tissue>
        <tissue>Muscle</tissue>
        <tissue>Testis</tissue>
    </source>
</reference>
<reference key="2">
    <citation type="unpublished observations" date="2020-03">
        <authorList>
            <person name="Puppione D.L."/>
        </authorList>
    </citation>
    <scope>IDENTIFICATION</scope>
</reference>
<accession>P0DTU6</accession>
<keyword id="KW-0153">Cholesterol metabolism</keyword>
<keyword id="KW-0325">Glycoprotein</keyword>
<keyword id="KW-0345">HDL</keyword>
<keyword id="KW-0443">Lipid metabolism</keyword>
<keyword id="KW-0445">Lipid transport</keyword>
<keyword id="KW-0449">Lipoprotein</keyword>
<keyword id="KW-0558">Oxidation</keyword>
<keyword id="KW-0564">Palmitate</keyword>
<keyword id="KW-0597">Phosphoprotein</keyword>
<keyword id="KW-0677">Repeat</keyword>
<keyword id="KW-0964">Secreted</keyword>
<keyword id="KW-0732">Signal</keyword>
<keyword id="KW-0753">Steroid metabolism</keyword>
<keyword id="KW-1207">Sterol metabolism</keyword>
<keyword id="KW-0813">Transport</keyword>
<gene>
    <name type="primary">APOA1</name>
</gene>
<proteinExistence type="inferred from homology"/>
<protein>
    <recommendedName>
        <fullName>Apolipoprotein A-I</fullName>
        <shortName>Apo-AI</shortName>
        <shortName>ApoA-I</shortName>
    </recommendedName>
    <alternativeName>
        <fullName>Apolipoprotein A1</fullName>
    </alternativeName>
    <component>
        <recommendedName>
            <fullName>Proapolipoprotein A-I</fullName>
            <shortName>ProapoA-I</shortName>
        </recommendedName>
    </component>
    <component>
        <recommendedName>
            <fullName>Truncated apolipoprotein A-I</fullName>
        </recommendedName>
    </component>
</protein>
<comment type="function">
    <text evidence="3">Participates in the reverse transport of cholesterol from tissues to the liver for excretion by promoting cholesterol efflux from tissues and by acting as a cofactor for the lecithin cholesterol acyltransferase (LCAT). As part of the SPAP complex, activates spermatozoa motility.</text>
</comment>
<comment type="subunit">
    <text evidence="2 3 5">Homodimer (By similarity). Interacts with APOA1BP and CLU. Component of a sperm activating protein complex (SPAP), consisting of APOA1, an immunoglobulin heavy chain, an immunoglobulin light chain and albumin. Interacts with NDRG1. Interacts with SCGB3A2 (By similarity). Interacts with NAXE and YJEFN3 (By similarity).</text>
</comment>
<comment type="subcellular location">
    <subcellularLocation>
        <location evidence="3">Secreted</location>
    </subcellularLocation>
</comment>
<comment type="PTM">
    <text evidence="4">Glycosylated.</text>
</comment>
<comment type="PTM">
    <text evidence="4">Palmitoylated.</text>
</comment>
<comment type="PTM">
    <text evidence="1">Phosphorylation sites are present in the extracellular medium.</text>
</comment>
<comment type="similarity">
    <text evidence="7">Belongs to the apolipoprotein A1/A4/E family.</text>
</comment>
<feature type="signal peptide" evidence="6">
    <location>
        <begin position="1"/>
        <end position="18"/>
    </location>
</feature>
<feature type="chain" id="PRO_0000450132" description="Proapolipoprotein A-I">
    <location>
        <begin position="19"/>
        <end position="264"/>
    </location>
</feature>
<feature type="chain" id="PRO_0000450133" description="Apolipoprotein A-I">
    <location>
        <begin position="25"/>
        <end position="264"/>
    </location>
</feature>
<feature type="chain" id="PRO_0000450134" description="Truncated apolipoprotein A-I" evidence="3">
    <location>
        <begin position="25"/>
        <end position="263"/>
    </location>
</feature>
<feature type="repeat" description="1">
    <location>
        <begin position="67"/>
        <end position="88"/>
    </location>
</feature>
<feature type="repeat" description="2">
    <location>
        <begin position="89"/>
        <end position="110"/>
    </location>
</feature>
<feature type="repeat" description="3; half-length">
    <location>
        <begin position="111"/>
        <end position="121"/>
    </location>
</feature>
<feature type="repeat" description="4">
    <location>
        <begin position="122"/>
        <end position="143"/>
    </location>
</feature>
<feature type="repeat" description="5">
    <location>
        <begin position="144"/>
        <end position="165"/>
    </location>
</feature>
<feature type="repeat" description="6">
    <location>
        <begin position="166"/>
        <end position="187"/>
    </location>
</feature>
<feature type="repeat" description="7; truncated">
    <location>
        <begin position="188"/>
        <end position="207"/>
    </location>
</feature>
<feature type="repeat" description="8">
    <location>
        <begin position="208"/>
        <end position="229"/>
    </location>
</feature>
<feature type="repeat" description="9; half-length">
    <location>
        <begin position="230"/>
        <end position="240"/>
    </location>
</feature>
<feature type="repeat" description="10">
    <location>
        <begin position="241"/>
        <end position="264"/>
    </location>
</feature>
<feature type="region of interest" description="10 X approximate tandem repeats">
    <location>
        <begin position="67"/>
        <end position="264"/>
    </location>
</feature>
<feature type="modified residue" description="Methionine sulfoxide" evidence="3">
    <location>
        <position position="193"/>
    </location>
</feature>
<organism>
    <name type="scientific">Cavia aperea</name>
    <name type="common">Brazilian guinea pig</name>
    <dbReference type="NCBI Taxonomy" id="37548"/>
    <lineage>
        <taxon>Eukaryota</taxon>
        <taxon>Metazoa</taxon>
        <taxon>Chordata</taxon>
        <taxon>Craniata</taxon>
        <taxon>Vertebrata</taxon>
        <taxon>Euteleostomi</taxon>
        <taxon>Mammalia</taxon>
        <taxon>Eutheria</taxon>
        <taxon>Euarchontoglires</taxon>
        <taxon>Glires</taxon>
        <taxon>Rodentia</taxon>
        <taxon>Hystricomorpha</taxon>
        <taxon>Caviidae</taxon>
        <taxon>Cavia</taxon>
    </lineage>
</organism>